<protein>
    <recommendedName>
        <fullName>Uncharacterized mitochondrial protein ymf27</fullName>
    </recommendedName>
    <alternativeName>
        <fullName>ORF69</fullName>
    </alternativeName>
</protein>
<dbReference type="EMBL" id="M68929">
    <property type="protein sequence ID" value="AAC09407.1"/>
    <property type="molecule type" value="Genomic_DNA"/>
</dbReference>
<dbReference type="PIR" id="S25969">
    <property type="entry name" value="S25969"/>
</dbReference>
<dbReference type="GO" id="GO:0005739">
    <property type="term" value="C:mitochondrion"/>
    <property type="evidence" value="ECO:0007669"/>
    <property type="project" value="UniProtKB-SubCell"/>
</dbReference>
<feature type="chain" id="PRO_0000196854" description="Uncharacterized mitochondrial protein ymf27">
    <location>
        <begin position="1"/>
        <end position="69"/>
    </location>
</feature>
<gene>
    <name type="primary">YMF27</name>
</gene>
<geneLocation type="mitochondrion"/>
<evidence type="ECO:0000305" key="1"/>
<reference key="1">
    <citation type="journal article" date="1992" name="J. Mol. Biol.">
        <title>Gene organization deduced from the complete sequence of liverwort Marchantia polymorpha mitochondrial DNA. A primitive form of plant mitochondrial genome.</title>
        <authorList>
            <person name="Oda K."/>
            <person name="Yamato K."/>
            <person name="Ohta E."/>
            <person name="Nakamura Y."/>
            <person name="Takemura M."/>
            <person name="Nozato N."/>
            <person name="Akashi K."/>
            <person name="Kanegae T."/>
            <person name="Ogura Y."/>
            <person name="Kohchi T."/>
            <person name="Ohyama K."/>
        </authorList>
    </citation>
    <scope>NUCLEOTIDE SEQUENCE [GENOMIC DNA]</scope>
</reference>
<comment type="subcellular location">
    <subcellularLocation>
        <location evidence="1">Mitochondrion</location>
    </subcellularLocation>
</comment>
<name>YMF27_MARPO</name>
<keyword id="KW-0496">Mitochondrion</keyword>
<accession>P38469</accession>
<sequence length="69" mass="7940">MASLFSTFRTQTFLYPAHTFIYPAHTFSHFGPAFFGQALHLFGPGLGLFERENAHCHIFDNRKTPPRLQ</sequence>
<organism>
    <name type="scientific">Marchantia polymorpha</name>
    <name type="common">Common liverwort</name>
    <name type="synonym">Marchantia aquatica</name>
    <dbReference type="NCBI Taxonomy" id="3197"/>
    <lineage>
        <taxon>Eukaryota</taxon>
        <taxon>Viridiplantae</taxon>
        <taxon>Streptophyta</taxon>
        <taxon>Embryophyta</taxon>
        <taxon>Marchantiophyta</taxon>
        <taxon>Marchantiopsida</taxon>
        <taxon>Marchantiidae</taxon>
        <taxon>Marchantiales</taxon>
        <taxon>Marchantiaceae</taxon>
        <taxon>Marchantia</taxon>
    </lineage>
</organism>
<proteinExistence type="predicted"/>